<comment type="function">
    <text>In the first step of glycine reductase, the substrate is bound to component PB via a Schiff base intermediate. Then the PB-activated substrate is nucleophilically attacked by the selenol anion of component PA to transform it to a carboxymethylated selenoether and the respective amine. By action of component PC, acetyl phosphate is formed, leaving component PA in its oxidized state. Finally component PA becomes reduced by the thioredoxin system to start a new catalytic cycle of reductive deamination.</text>
</comment>
<comment type="catalytic activity">
    <reaction>
        <text>acetyl phosphate + [thioredoxin]-disulfide + NH4(+) + H2O = [thioredoxin]-dithiol + glycine + phosphate + H(+)</text>
        <dbReference type="Rhea" id="RHEA:12232"/>
        <dbReference type="Rhea" id="RHEA-COMP:10698"/>
        <dbReference type="Rhea" id="RHEA-COMP:10700"/>
        <dbReference type="ChEBI" id="CHEBI:15377"/>
        <dbReference type="ChEBI" id="CHEBI:15378"/>
        <dbReference type="ChEBI" id="CHEBI:22191"/>
        <dbReference type="ChEBI" id="CHEBI:28938"/>
        <dbReference type="ChEBI" id="CHEBI:29950"/>
        <dbReference type="ChEBI" id="CHEBI:43474"/>
        <dbReference type="ChEBI" id="CHEBI:50058"/>
        <dbReference type="ChEBI" id="CHEBI:57305"/>
        <dbReference type="EC" id="1.21.4.2"/>
    </reaction>
</comment>
<comment type="subunit">
    <text>Heterohexamer of two alpha, two beta and two gamma subunits. Component of the glycine reductase complex, together with components A and C. PB is substrate specific.</text>
</comment>
<comment type="similarity">
    <text evidence="1">Belongs to the GrdB/GrdF/GrdH family.</text>
</comment>
<gene>
    <name type="primary">grdB</name>
</gene>
<evidence type="ECO:0000305" key="1"/>
<proteinExistence type="evidence at protein level"/>
<keyword id="KW-0903">Direct protein sequencing</keyword>
<keyword id="KW-0560">Oxidoreductase</keyword>
<keyword id="KW-0712">Selenocysteine</keyword>
<sequence length="438" mass="47369">MSKIRVVHYINQFFAGVGGEEKADIEPFIAESLPPVSQSLSNLIKDEAEVVGTVVCGDSYFGENLVEAKNRILEMIKSFNPDIVVAGPAFNAGRYGVAAATVTKAVQDELGIPAVTGMYIENPGADMFKKYAYIISTGNSAAAMRTALPAMAKFAMKLAKGEEIGGPVAEGYIERGIRFNMFKEDRGAKRAVAMLVKKLKGEEYETEYPMPSFDKVEPGKAIKDMSKAKIAIVTSGGIVPKGNPDRIESSSASKYGKYDIQGIDDLTSEGWETAHGGHDPIYANEDADRVIPVDVLRDMEKEGVIGELHRYFYSTTGNGTAVASSKKFAEEFTKELVADGVDAVILTSTUGTCTRCGASMVKEIERSGIPVVHIATVTPISLTVGANRIVPAIAIPHPLGNPALSHEEEKALRRKIVEKALEALQTEVEEQTVFERNY</sequence>
<dbReference type="EC" id="1.21.4.2"/>
<dbReference type="EMBL" id="Y14275">
    <property type="protein sequence ID" value="CAA74651.1"/>
    <property type="molecule type" value="Genomic_DNA"/>
</dbReference>
<dbReference type="EMBL" id="L04500">
    <property type="protein sequence ID" value="AAB93302.2"/>
    <property type="molecule type" value="Genomic_DNA"/>
</dbReference>
<dbReference type="PIR" id="S63509">
    <property type="entry name" value="S63509"/>
</dbReference>
<dbReference type="KEGG" id="ag:CAA74651"/>
<dbReference type="BioCyc" id="MetaCyc:MONOMER-20601"/>
<dbReference type="GO" id="GO:0030700">
    <property type="term" value="C:glycine reductase complex"/>
    <property type="evidence" value="ECO:0007669"/>
    <property type="project" value="InterPro"/>
</dbReference>
<dbReference type="GO" id="GO:0030699">
    <property type="term" value="F:glycine reductase activity"/>
    <property type="evidence" value="ECO:0007669"/>
    <property type="project" value="UniProtKB-EC"/>
</dbReference>
<dbReference type="InterPro" id="IPR023193">
    <property type="entry name" value="EPSP_synthase_CS"/>
</dbReference>
<dbReference type="InterPro" id="IPR010186">
    <property type="entry name" value="Gly_red_sel_B"/>
</dbReference>
<dbReference type="InterPro" id="IPR010187">
    <property type="entry name" value="Various_sel_PB"/>
</dbReference>
<dbReference type="NCBIfam" id="TIGR01917">
    <property type="entry name" value="gly_red_sel_B"/>
    <property type="match status" value="1"/>
</dbReference>
<dbReference type="NCBIfam" id="TIGR01918">
    <property type="entry name" value="various_sel_PB"/>
    <property type="match status" value="1"/>
</dbReference>
<dbReference type="Pfam" id="PF07355">
    <property type="entry name" value="GRDB"/>
    <property type="match status" value="1"/>
</dbReference>
<dbReference type="PROSITE" id="PS00104">
    <property type="entry name" value="EPSP_SYNTHASE_1"/>
    <property type="match status" value="1"/>
</dbReference>
<name>GRDB_PEPAC</name>
<reference key="1">
    <citation type="journal article" date="1999" name="Eur. J. Biochem.">
        <title>Substrate-specific selenoprotein B of glycine reductase from Eubacterium acidaminophilum. Biochemical and molecular analysis.</title>
        <authorList>
            <person name="Wagner M."/>
            <person name="Sonntag D."/>
            <person name="Grimm R."/>
            <person name="Pich A."/>
            <person name="Eckerskorn C."/>
            <person name="Soehling B."/>
            <person name="Andreesen J.R."/>
        </authorList>
    </citation>
    <scope>NUCLEOTIDE SEQUENCE [GENOMIC DNA]</scope>
    <scope>PROTEIN SEQUENCE OF 1-30; 200-215; 229-238; 241-251 AND 327-334</scope>
    <source>
        <strain>ATCC 49065 / DSM 3953 / al-2</strain>
    </source>
</reference>
<reference key="2">
    <citation type="thesis" date="1993" institute="University of Goettingen" country="Germany">
        <title>Eubacterium acidaminophilum selenoprotein B.</title>
        <authorList>
            <person name="Luebbers M."/>
        </authorList>
    </citation>
    <scope>NUCLEOTIDE SEQUENCE [GENOMIC DNA] OF 199-438</scope>
    <source>
        <strain>ATCC 49065 / DSM 3953 / al-2</strain>
    </source>
</reference>
<reference key="3">
    <citation type="journal article" date="1995" name="Eur. J. Biochem.">
        <title>Purification and characterization of protein PB of betaine reductase and its relationship to the corresponding proteins glycine reductase and sarcosine reductase from Eubacterium acidaminophilum.</title>
        <authorList>
            <person name="Meyer M."/>
            <person name="Granderath K."/>
            <person name="Andreesen J.R."/>
        </authorList>
    </citation>
    <scope>PROTEIN SEQUENCE OF 2-30</scope>
    <scope>CHARACTERIZATION</scope>
    <source>
        <strain>ATCC 49065 / DSM 3953 / al-2</strain>
    </source>
</reference>
<feature type="chain" id="PRO_0000087600" description="Glycine reductase complex component B subunit gamma">
    <location>
        <begin position="1"/>
        <end position="438"/>
    </location>
</feature>
<feature type="active site">
    <location>
        <position position="350"/>
    </location>
</feature>
<feature type="non-standard amino acid" description="Selenocysteine">
    <location>
        <position position="350"/>
    </location>
</feature>
<accession>Q9R4G8</accession>
<accession>O32519</accession>
<accession>O53034</accession>
<protein>
    <recommendedName>
        <fullName>Glycine reductase complex component B subunit gamma</fullName>
        <ecNumber>1.21.4.2</ecNumber>
    </recommendedName>
    <alternativeName>
        <fullName>Selenoprotein PB gamma</fullName>
    </alternativeName>
</protein>
<organism>
    <name type="scientific">Peptoclostridium acidaminophilum</name>
    <name type="common">Eubacterium acidaminophilum</name>
    <dbReference type="NCBI Taxonomy" id="1731"/>
    <lineage>
        <taxon>Bacteria</taxon>
        <taxon>Bacillati</taxon>
        <taxon>Bacillota</taxon>
        <taxon>Clostridia</taxon>
        <taxon>Peptostreptococcales</taxon>
        <taxon>Peptoclostridiaceae</taxon>
        <taxon>Peptoclostridium</taxon>
    </lineage>
</organism>